<name>MDH_XANOM</name>
<reference key="1">
    <citation type="journal article" date="2005" name="Jpn. Agric. Res. Q.">
        <title>Genome sequence of Xanthomonas oryzae pv. oryzae suggests contribution of large numbers of effector genes and insertion sequences to its race diversity.</title>
        <authorList>
            <person name="Ochiai H."/>
            <person name="Inoue Y."/>
            <person name="Takeya M."/>
            <person name="Sasaki A."/>
            <person name="Kaku H."/>
        </authorList>
    </citation>
    <scope>NUCLEOTIDE SEQUENCE [LARGE SCALE GENOMIC DNA]</scope>
    <source>
        <strain>MAFF 311018</strain>
    </source>
</reference>
<organism>
    <name type="scientific">Xanthomonas oryzae pv. oryzae (strain MAFF 311018)</name>
    <dbReference type="NCBI Taxonomy" id="342109"/>
    <lineage>
        <taxon>Bacteria</taxon>
        <taxon>Pseudomonadati</taxon>
        <taxon>Pseudomonadota</taxon>
        <taxon>Gammaproteobacteria</taxon>
        <taxon>Lysobacterales</taxon>
        <taxon>Lysobacteraceae</taxon>
        <taxon>Xanthomonas</taxon>
    </lineage>
</organism>
<proteinExistence type="inferred from homology"/>
<evidence type="ECO:0000255" key="1">
    <source>
        <dbReference type="HAMAP-Rule" id="MF_01517"/>
    </source>
</evidence>
<accession>Q2P736</accession>
<protein>
    <recommendedName>
        <fullName evidence="1">Malate dehydrogenase</fullName>
        <ecNumber evidence="1">1.1.1.37</ecNumber>
    </recommendedName>
</protein>
<comment type="function">
    <text evidence="1">Catalyzes the reversible oxidation of malate to oxaloacetate.</text>
</comment>
<comment type="catalytic activity">
    <reaction evidence="1">
        <text>(S)-malate + NAD(+) = oxaloacetate + NADH + H(+)</text>
        <dbReference type="Rhea" id="RHEA:21432"/>
        <dbReference type="ChEBI" id="CHEBI:15378"/>
        <dbReference type="ChEBI" id="CHEBI:15589"/>
        <dbReference type="ChEBI" id="CHEBI:16452"/>
        <dbReference type="ChEBI" id="CHEBI:57540"/>
        <dbReference type="ChEBI" id="CHEBI:57945"/>
        <dbReference type="EC" id="1.1.1.37"/>
    </reaction>
</comment>
<comment type="similarity">
    <text evidence="1">Belongs to the LDH/MDH superfamily. MDH type 2 family.</text>
</comment>
<dbReference type="EC" id="1.1.1.37" evidence="1"/>
<dbReference type="EMBL" id="AP008229">
    <property type="protein sequence ID" value="BAE67641.1"/>
    <property type="molecule type" value="Genomic_DNA"/>
</dbReference>
<dbReference type="RefSeq" id="WP_011257835.1">
    <property type="nucleotide sequence ID" value="NC_007705.1"/>
</dbReference>
<dbReference type="SMR" id="Q2P736"/>
<dbReference type="KEGG" id="xom:XOO0886"/>
<dbReference type="HOGENOM" id="CLU_040727_2_0_6"/>
<dbReference type="GO" id="GO:0030060">
    <property type="term" value="F:L-malate dehydrogenase (NAD+) activity"/>
    <property type="evidence" value="ECO:0007669"/>
    <property type="project" value="UniProtKB-UniRule"/>
</dbReference>
<dbReference type="GO" id="GO:0006108">
    <property type="term" value="P:malate metabolic process"/>
    <property type="evidence" value="ECO:0007669"/>
    <property type="project" value="InterPro"/>
</dbReference>
<dbReference type="GO" id="GO:0006099">
    <property type="term" value="P:tricarboxylic acid cycle"/>
    <property type="evidence" value="ECO:0007669"/>
    <property type="project" value="UniProtKB-UniRule"/>
</dbReference>
<dbReference type="CDD" id="cd01338">
    <property type="entry name" value="MDH_chloroplast-like"/>
    <property type="match status" value="1"/>
</dbReference>
<dbReference type="FunFam" id="3.40.50.720:FF:000010">
    <property type="entry name" value="Malate dehydrogenase"/>
    <property type="match status" value="1"/>
</dbReference>
<dbReference type="FunFam" id="3.90.110.10:FF:000002">
    <property type="entry name" value="Malate dehydrogenase"/>
    <property type="match status" value="1"/>
</dbReference>
<dbReference type="Gene3D" id="3.90.110.10">
    <property type="entry name" value="Lactate dehydrogenase/glycoside hydrolase, family 4, C-terminal"/>
    <property type="match status" value="1"/>
</dbReference>
<dbReference type="Gene3D" id="3.40.50.720">
    <property type="entry name" value="NAD(P)-binding Rossmann-like Domain"/>
    <property type="match status" value="1"/>
</dbReference>
<dbReference type="HAMAP" id="MF_01517">
    <property type="entry name" value="Malate_dehydrog_2"/>
    <property type="match status" value="1"/>
</dbReference>
<dbReference type="InterPro" id="IPR001557">
    <property type="entry name" value="L-lactate/malate_DH"/>
</dbReference>
<dbReference type="InterPro" id="IPR022383">
    <property type="entry name" value="Lactate/malate_DH_C"/>
</dbReference>
<dbReference type="InterPro" id="IPR001236">
    <property type="entry name" value="Lactate/malate_DH_N"/>
</dbReference>
<dbReference type="InterPro" id="IPR015955">
    <property type="entry name" value="Lactate_DH/Glyco_Ohase_4_C"/>
</dbReference>
<dbReference type="InterPro" id="IPR010945">
    <property type="entry name" value="Malate_DH_type2"/>
</dbReference>
<dbReference type="InterPro" id="IPR036291">
    <property type="entry name" value="NAD(P)-bd_dom_sf"/>
</dbReference>
<dbReference type="NCBIfam" id="TIGR01759">
    <property type="entry name" value="MalateDH-SF1"/>
    <property type="match status" value="1"/>
</dbReference>
<dbReference type="NCBIfam" id="NF003916">
    <property type="entry name" value="PRK05442.1"/>
    <property type="match status" value="1"/>
</dbReference>
<dbReference type="PANTHER" id="PTHR23382">
    <property type="entry name" value="MALATE DEHYDROGENASE"/>
    <property type="match status" value="1"/>
</dbReference>
<dbReference type="Pfam" id="PF02866">
    <property type="entry name" value="Ldh_1_C"/>
    <property type="match status" value="1"/>
</dbReference>
<dbReference type="Pfam" id="PF00056">
    <property type="entry name" value="Ldh_1_N"/>
    <property type="match status" value="1"/>
</dbReference>
<dbReference type="PIRSF" id="PIRSF000102">
    <property type="entry name" value="Lac_mal_DH"/>
    <property type="match status" value="1"/>
</dbReference>
<dbReference type="SUPFAM" id="SSF56327">
    <property type="entry name" value="LDH C-terminal domain-like"/>
    <property type="match status" value="1"/>
</dbReference>
<dbReference type="SUPFAM" id="SSF51735">
    <property type="entry name" value="NAD(P)-binding Rossmann-fold domains"/>
    <property type="match status" value="1"/>
</dbReference>
<sequence length="328" mass="34925">MKAPVRVAVTGAAGQIGYALLFRIASGEMLGKDQPVILQLLELSNEKAQAALKGVMMELEDCAFPLLAGMVGTDDAEVAFKDIDVALLVGARPRGPGMERKDLLLENAKIFTAQGAALNKVAKRDVKVLVVGNPANTNAYIAMKSAPDLNPKNFTAMLRLDHNRALSQLALKLGKPVGGIEKLVVWGNHSPTMYPDYRFATSDGASIGDAINDQEWNASTFIPTVGKRGAAIIEARGLSSAASAANAAIDHVRDWVLGSNGKWVTMGVPSDGSYGISEGVIFGFPVTTENGQYSLVKDLPIDDFSQKYIDKTLAELEEERSGVSHLLG</sequence>
<gene>
    <name evidence="1" type="primary">mdh</name>
    <name type="ordered locus">XOO0886</name>
</gene>
<keyword id="KW-0520">NAD</keyword>
<keyword id="KW-0560">Oxidoreductase</keyword>
<keyword id="KW-0816">Tricarboxylic acid cycle</keyword>
<feature type="chain" id="PRO_0000294409" description="Malate dehydrogenase">
    <location>
        <begin position="1"/>
        <end position="328"/>
    </location>
</feature>
<feature type="active site" description="Proton acceptor" evidence="1">
    <location>
        <position position="189"/>
    </location>
</feature>
<feature type="binding site" evidence="1">
    <location>
        <begin position="11"/>
        <end position="17"/>
    </location>
    <ligand>
        <name>NAD(+)</name>
        <dbReference type="ChEBI" id="CHEBI:57540"/>
    </ligand>
</feature>
<feature type="binding site" evidence="1">
    <location>
        <position position="94"/>
    </location>
    <ligand>
        <name>substrate</name>
    </ligand>
</feature>
<feature type="binding site" evidence="1">
    <location>
        <position position="100"/>
    </location>
    <ligand>
        <name>substrate</name>
    </ligand>
</feature>
<feature type="binding site" evidence="1">
    <location>
        <position position="107"/>
    </location>
    <ligand>
        <name>NAD(+)</name>
        <dbReference type="ChEBI" id="CHEBI:57540"/>
    </ligand>
</feature>
<feature type="binding site" evidence="1">
    <location>
        <position position="114"/>
    </location>
    <ligand>
        <name>NAD(+)</name>
        <dbReference type="ChEBI" id="CHEBI:57540"/>
    </ligand>
</feature>
<feature type="binding site" evidence="1">
    <location>
        <begin position="131"/>
        <end position="133"/>
    </location>
    <ligand>
        <name>NAD(+)</name>
        <dbReference type="ChEBI" id="CHEBI:57540"/>
    </ligand>
</feature>
<feature type="binding site" evidence="1">
    <location>
        <position position="133"/>
    </location>
    <ligand>
        <name>substrate</name>
    </ligand>
</feature>
<feature type="binding site" evidence="1">
    <location>
        <position position="164"/>
    </location>
    <ligand>
        <name>substrate</name>
    </ligand>
</feature>